<reference key="1">
    <citation type="journal article" date="2008" name="BMC Genomics">
        <title>The genome sequence of the fish pathogen Aliivibrio salmonicida strain LFI1238 shows extensive evidence of gene decay.</title>
        <authorList>
            <person name="Hjerde E."/>
            <person name="Lorentzen M.S."/>
            <person name="Holden M.T."/>
            <person name="Seeger K."/>
            <person name="Paulsen S."/>
            <person name="Bason N."/>
            <person name="Churcher C."/>
            <person name="Harris D."/>
            <person name="Norbertczak H."/>
            <person name="Quail M.A."/>
            <person name="Sanders S."/>
            <person name="Thurston S."/>
            <person name="Parkhill J."/>
            <person name="Willassen N.P."/>
            <person name="Thomson N.R."/>
        </authorList>
    </citation>
    <scope>NUCLEOTIDE SEQUENCE [LARGE SCALE GENOMIC DNA]</scope>
    <source>
        <strain>LFI1238</strain>
    </source>
</reference>
<protein>
    <recommendedName>
        <fullName evidence="1">Large ribosomal subunit protein bL34</fullName>
    </recommendedName>
    <alternativeName>
        <fullName evidence="3">50S ribosomal protein L34</fullName>
    </alternativeName>
</protein>
<evidence type="ECO:0000255" key="1">
    <source>
        <dbReference type="HAMAP-Rule" id="MF_00391"/>
    </source>
</evidence>
<evidence type="ECO:0000256" key="2">
    <source>
        <dbReference type="SAM" id="MobiDB-lite"/>
    </source>
</evidence>
<evidence type="ECO:0000305" key="3"/>
<gene>
    <name evidence="1" type="primary">rpmH</name>
    <name type="ordered locus">VSAL_I0005</name>
</gene>
<accession>B6EP42</accession>
<organism>
    <name type="scientific">Aliivibrio salmonicida (strain LFI1238)</name>
    <name type="common">Vibrio salmonicida (strain LFI1238)</name>
    <dbReference type="NCBI Taxonomy" id="316275"/>
    <lineage>
        <taxon>Bacteria</taxon>
        <taxon>Pseudomonadati</taxon>
        <taxon>Pseudomonadota</taxon>
        <taxon>Gammaproteobacteria</taxon>
        <taxon>Vibrionales</taxon>
        <taxon>Vibrionaceae</taxon>
        <taxon>Aliivibrio</taxon>
    </lineage>
</organism>
<comment type="similarity">
    <text evidence="1">Belongs to the bacterial ribosomal protein bL34 family.</text>
</comment>
<dbReference type="EMBL" id="FM178379">
    <property type="protein sequence ID" value="CAQ77690.1"/>
    <property type="molecule type" value="Genomic_DNA"/>
</dbReference>
<dbReference type="RefSeq" id="WP_012548915.1">
    <property type="nucleotide sequence ID" value="NC_011312.1"/>
</dbReference>
<dbReference type="SMR" id="B6EP42"/>
<dbReference type="KEGG" id="vsa:VSAL_I0005"/>
<dbReference type="eggNOG" id="COG0230">
    <property type="taxonomic scope" value="Bacteria"/>
</dbReference>
<dbReference type="HOGENOM" id="CLU_129938_2_0_6"/>
<dbReference type="Proteomes" id="UP000001730">
    <property type="component" value="Chromosome 1"/>
</dbReference>
<dbReference type="GO" id="GO:1990904">
    <property type="term" value="C:ribonucleoprotein complex"/>
    <property type="evidence" value="ECO:0007669"/>
    <property type="project" value="UniProtKB-KW"/>
</dbReference>
<dbReference type="GO" id="GO:0005840">
    <property type="term" value="C:ribosome"/>
    <property type="evidence" value="ECO:0007669"/>
    <property type="project" value="UniProtKB-KW"/>
</dbReference>
<dbReference type="GO" id="GO:0003735">
    <property type="term" value="F:structural constituent of ribosome"/>
    <property type="evidence" value="ECO:0007669"/>
    <property type="project" value="InterPro"/>
</dbReference>
<dbReference type="GO" id="GO:0006412">
    <property type="term" value="P:translation"/>
    <property type="evidence" value="ECO:0007669"/>
    <property type="project" value="UniProtKB-UniRule"/>
</dbReference>
<dbReference type="FunFam" id="1.10.287.3980:FF:000001">
    <property type="entry name" value="Mitochondrial ribosomal protein L34"/>
    <property type="match status" value="1"/>
</dbReference>
<dbReference type="Gene3D" id="1.10.287.3980">
    <property type="match status" value="1"/>
</dbReference>
<dbReference type="HAMAP" id="MF_00391">
    <property type="entry name" value="Ribosomal_bL34"/>
    <property type="match status" value="1"/>
</dbReference>
<dbReference type="InterPro" id="IPR000271">
    <property type="entry name" value="Ribosomal_bL34"/>
</dbReference>
<dbReference type="InterPro" id="IPR020939">
    <property type="entry name" value="Ribosomal_bL34_CS"/>
</dbReference>
<dbReference type="NCBIfam" id="TIGR01030">
    <property type="entry name" value="rpmH_bact"/>
    <property type="match status" value="1"/>
</dbReference>
<dbReference type="PANTHER" id="PTHR14503:SF4">
    <property type="entry name" value="LARGE RIBOSOMAL SUBUNIT PROTEIN BL34M"/>
    <property type="match status" value="1"/>
</dbReference>
<dbReference type="PANTHER" id="PTHR14503">
    <property type="entry name" value="MITOCHONDRIAL RIBOSOMAL PROTEIN 34 FAMILY MEMBER"/>
    <property type="match status" value="1"/>
</dbReference>
<dbReference type="Pfam" id="PF00468">
    <property type="entry name" value="Ribosomal_L34"/>
    <property type="match status" value="1"/>
</dbReference>
<dbReference type="PROSITE" id="PS00784">
    <property type="entry name" value="RIBOSOMAL_L34"/>
    <property type="match status" value="1"/>
</dbReference>
<sequence length="44" mass="5197">MKRTFQPSVLKRKRSHGFRARMATKNGRNTINARRAKGRKRLSK</sequence>
<proteinExistence type="inferred from homology"/>
<feature type="chain" id="PRO_1000122889" description="Large ribosomal subunit protein bL34">
    <location>
        <begin position="1"/>
        <end position="44"/>
    </location>
</feature>
<feature type="region of interest" description="Disordered" evidence="2">
    <location>
        <begin position="1"/>
        <end position="44"/>
    </location>
</feature>
<feature type="compositionally biased region" description="Basic residues" evidence="2">
    <location>
        <begin position="10"/>
        <end position="19"/>
    </location>
</feature>
<feature type="compositionally biased region" description="Basic residues" evidence="2">
    <location>
        <begin position="34"/>
        <end position="44"/>
    </location>
</feature>
<keyword id="KW-0687">Ribonucleoprotein</keyword>
<keyword id="KW-0689">Ribosomal protein</keyword>
<name>RL34_ALISL</name>